<sequence>MRWGRRDDRDTGKILRNRSRNRFNIYHYVSTVKKVKETERELLRLTQTWKAIRLISYNSVGISINRLTSRLIHKLHELLNGLIS</sequence>
<accession>P20212</accession>
<feature type="chain" id="PRO_0000223012" description="Uncharacterized protein C-84">
    <location>
        <begin position="1"/>
        <end position="84"/>
    </location>
</feature>
<dbReference type="EMBL" id="X07234">
    <property type="protein sequence ID" value="CAA30206.1"/>
    <property type="molecule type" value="Genomic_DNA"/>
</dbReference>
<dbReference type="PIR" id="S03239">
    <property type="entry name" value="S03239"/>
</dbReference>
<dbReference type="RefSeq" id="NP_039804.1">
    <property type="nucleotide sequence ID" value="NC_001338.1"/>
</dbReference>
<dbReference type="KEGG" id="vg:2559656"/>
<dbReference type="OrthoDB" id="25181at10239"/>
<dbReference type="Proteomes" id="UP000000854">
    <property type="component" value="Genome"/>
</dbReference>
<dbReference type="InterPro" id="IPR020272">
    <property type="entry name" value="C-84-like"/>
</dbReference>
<dbReference type="Pfam" id="PF17598">
    <property type="entry name" value="DUF5494"/>
    <property type="match status" value="1"/>
</dbReference>
<proteinExistence type="predicted"/>
<keyword id="KW-1185">Reference proteome</keyword>
<reference key="1">
    <citation type="journal article" date="1991" name="Virology">
        <title>Complete nucleotide sequence of the virus SSV1 of the archaebacterium Sulfolobus shibatae.</title>
        <authorList>
            <person name="Palm P."/>
            <person name="Schleper C."/>
            <person name="Grampp B."/>
            <person name="Yeats S."/>
            <person name="McWilliam P."/>
            <person name="Reiter W.-D."/>
            <person name="Zillig W."/>
        </authorList>
    </citation>
    <scope>NUCLEOTIDE SEQUENCE [GENOMIC DNA]</scope>
</reference>
<comment type="function">
    <text>This protein may be involved in virus assembly.</text>
</comment>
<gene>
    <name type="ORF">c84</name>
</gene>
<protein>
    <recommendedName>
        <fullName>Uncharacterized protein C-84</fullName>
    </recommendedName>
</protein>
<name>C84_SSV1</name>
<organismHost>
    <name type="scientific">Saccharolobus solfataricus</name>
    <name type="common">Sulfolobus solfataricus</name>
    <dbReference type="NCBI Taxonomy" id="2287"/>
</organismHost>
<organism>
    <name type="scientific">Sulfolobus spindle-shape virus 1</name>
    <name type="common">SSV1</name>
    <dbReference type="NCBI Taxonomy" id="244589"/>
    <lineage>
        <taxon>Viruses</taxon>
        <taxon>Viruses incertae sedis</taxon>
        <taxon>Fuselloviridae</taxon>
        <taxon>Alphafusellovirus</taxon>
    </lineage>
</organism>